<feature type="signal peptide">
    <location>
        <begin position="1"/>
        <end position="22"/>
    </location>
</feature>
<feature type="chain" id="PRO_0000002022" description="Proapolipoprotein C-II">
    <location>
        <begin position="23"/>
        <end position="101"/>
    </location>
</feature>
<feature type="chain" id="PRO_0000430836" description="Apolipoprotein C-II" evidence="1">
    <location>
        <begin position="29"/>
        <end position="101"/>
    </location>
</feature>
<feature type="region of interest" description="Lipid binding" evidence="1">
    <location>
        <begin position="66"/>
        <end position="74"/>
    </location>
</feature>
<feature type="region of interest" description="Lipoprotein lipase cofactor" evidence="1">
    <location>
        <begin position="78"/>
        <end position="101"/>
    </location>
</feature>
<gene>
    <name type="primary">APOC2</name>
</gene>
<comment type="function">
    <text evidence="1">Component of chylomicrons, very low-density lipoproteins (VLDL), low-density lipoproteins (LDL), and high-density lipoproteins (HDL) in plasma. Plays an important role in lipoprotein metabolism as an activator of lipoprotein lipase. Both proapolipoprotein C-II and apolipoprotein C-II can activate lipoprotein lipase.</text>
</comment>
<comment type="subcellular location">
    <subcellularLocation>
        <location evidence="1">Secreted</location>
    </subcellularLocation>
</comment>
<comment type="tissue specificity">
    <text evidence="2">Highly expressed in the liver. Moderately expressed in the ileum, jejunum and ovary.</text>
</comment>
<comment type="PTM">
    <text evidence="1">Proapolipoprotein C-II is synthesized as a sialic acid containing glycoprotein which is subsequently desialylated prior to its proteolytic processing.</text>
</comment>
<comment type="PTM">
    <text evidence="1">Proapolipoprotein C-II, the major form found in plasma undergoes proteolytic cleavage of its N-terminal hexapeptide to generate apolipoprotein C-II, which occurs as the minor form in plasma.</text>
</comment>
<comment type="similarity">
    <text evidence="3">Belongs to the apolipoprotein C2 family.</text>
</comment>
<evidence type="ECO:0000250" key="1">
    <source>
        <dbReference type="UniProtKB" id="P02655"/>
    </source>
</evidence>
<evidence type="ECO:0000269" key="2">
    <source>
    </source>
</evidence>
<evidence type="ECO:0000305" key="3"/>
<organism>
    <name type="scientific">Canis lupus familiaris</name>
    <name type="common">Dog</name>
    <name type="synonym">Canis familiaris</name>
    <dbReference type="NCBI Taxonomy" id="9615"/>
    <lineage>
        <taxon>Eukaryota</taxon>
        <taxon>Metazoa</taxon>
        <taxon>Chordata</taxon>
        <taxon>Craniata</taxon>
        <taxon>Vertebrata</taxon>
        <taxon>Euteleostomi</taxon>
        <taxon>Mammalia</taxon>
        <taxon>Eutheria</taxon>
        <taxon>Laurasiatheria</taxon>
        <taxon>Carnivora</taxon>
        <taxon>Caniformia</taxon>
        <taxon>Canidae</taxon>
        <taxon>Canis</taxon>
    </lineage>
</organism>
<name>APOC2_CANLF</name>
<protein>
    <recommendedName>
        <fullName>Apolipoprotein C-II</fullName>
        <shortName>Apo-CII</shortName>
        <shortName>ApoC-II</shortName>
    </recommendedName>
    <alternativeName>
        <fullName>Apolipoprotein C2</fullName>
    </alternativeName>
    <component>
        <recommendedName>
            <fullName>Proapolipoprotein C-II</fullName>
            <shortName>ProapoC-II</shortName>
        </recommendedName>
    </component>
</protein>
<reference key="1">
    <citation type="journal article" date="1987" name="J. Biol. Chem.">
        <title>Structure and expression of dog apolipoprotein C-II and C-III mRNAs. Implications for the evolution and functional constraints of apolipoprotein structure.</title>
        <authorList>
            <person name="Datta S."/>
            <person name="Li W.-H."/>
            <person name="Ghosh I."/>
            <person name="Luo C.-C."/>
            <person name="Chan L."/>
        </authorList>
    </citation>
    <scope>NUCLEOTIDE SEQUENCE [MRNA]</scope>
    <scope>TISSUE SPECIFICITY</scope>
</reference>
<reference key="2">
    <citation type="journal article" date="2008" name="Comp. Biochem. Physiol.">
        <title>Mass spectral analysis of the apolipoproteins on dog (Canis lupus familiaris) high density lipoproteins. Detection of apolipoprotein A-II.</title>
        <authorList>
            <person name="Puppione D.L."/>
            <person name="Bassilian S."/>
            <person name="Souda P."/>
            <person name="MacDonald M.H."/>
            <person name="Halgand F."/>
            <person name="Hagland F."/>
            <person name="Whitelegge J.P."/>
        </authorList>
    </citation>
    <scope>PROTEIN SEQUENCE OF 78-98</scope>
    <scope>IDENTIFICATION BY MASS SPECTROMETRY</scope>
    <source>
        <tissue>Plasma</tissue>
    </source>
</reference>
<accession>P12278</accession>
<proteinExistence type="evidence at protein level"/>
<sequence>MGTRYLLVLLLVLLVLGFEVQGAHESQQDETTSSALLTQMQESLYSYWGTARSAAEDLYKKAYPTTMDEKIRDIYSKSTAAVSTYAGIFTDQLLSMLKGDS</sequence>
<dbReference type="EMBL" id="M17177">
    <property type="protein sequence ID" value="AAA30829.1"/>
    <property type="molecule type" value="mRNA"/>
</dbReference>
<dbReference type="PIR" id="A28487">
    <property type="entry name" value="A28487"/>
</dbReference>
<dbReference type="RefSeq" id="NP_001003368.1">
    <property type="nucleotide sequence ID" value="NM_001003368.1"/>
</dbReference>
<dbReference type="RefSeq" id="XP_038509381.1">
    <property type="nucleotide sequence ID" value="XM_038653453.1"/>
</dbReference>
<dbReference type="SMR" id="P12278"/>
<dbReference type="STRING" id="9615.ENSCAFP00000006882"/>
<dbReference type="PaxDb" id="9615-ENSCAFP00000006882"/>
<dbReference type="Ensembl" id="ENSCAFT00000007426.5">
    <property type="protein sequence ID" value="ENSCAFP00000006882.3"/>
    <property type="gene ID" value="ENSCAFG00000004610.5"/>
</dbReference>
<dbReference type="Ensembl" id="ENSCAFT00030003915.1">
    <property type="protein sequence ID" value="ENSCAFP00030003475.1"/>
    <property type="gene ID" value="ENSCAFG00030002139.1"/>
</dbReference>
<dbReference type="Ensembl" id="ENSCAFT00040021204.1">
    <property type="protein sequence ID" value="ENSCAFP00040018404.1"/>
    <property type="gene ID" value="ENSCAFG00040011476.1"/>
</dbReference>
<dbReference type="Ensembl" id="ENSCAFT00845011687.1">
    <property type="protein sequence ID" value="ENSCAFP00845009125.1"/>
    <property type="gene ID" value="ENSCAFG00845006579.1"/>
</dbReference>
<dbReference type="GeneID" id="442969"/>
<dbReference type="KEGG" id="cfa:442969"/>
<dbReference type="CTD" id="344"/>
<dbReference type="VEuPathDB" id="HostDB:ENSCAFG00845006579"/>
<dbReference type="VGNC" id="VGNC:56913">
    <property type="gene designation" value="APOC2"/>
</dbReference>
<dbReference type="eggNOG" id="ENOG502SEJB">
    <property type="taxonomic scope" value="Eukaryota"/>
</dbReference>
<dbReference type="GeneTree" id="ENSGT00390000007913"/>
<dbReference type="HOGENOM" id="CLU_180154_0_0_1"/>
<dbReference type="InParanoid" id="P12278"/>
<dbReference type="OrthoDB" id="9881800at2759"/>
<dbReference type="Reactome" id="R-CFA-8963888">
    <property type="pathway name" value="Chylomicron assembly"/>
</dbReference>
<dbReference type="Reactome" id="R-CFA-8963901">
    <property type="pathway name" value="Chylomicron remodeling"/>
</dbReference>
<dbReference type="Reactome" id="R-CFA-8964058">
    <property type="pathway name" value="HDL remodeling"/>
</dbReference>
<dbReference type="Reactome" id="R-CFA-975634">
    <property type="pathway name" value="Retinoid metabolism and transport"/>
</dbReference>
<dbReference type="Proteomes" id="UP000002254">
    <property type="component" value="Chromosome 1"/>
</dbReference>
<dbReference type="Proteomes" id="UP000694429">
    <property type="component" value="Chromosome 1"/>
</dbReference>
<dbReference type="Proteomes" id="UP000694542">
    <property type="component" value="Chromosome 1"/>
</dbReference>
<dbReference type="Proteomes" id="UP000805418">
    <property type="component" value="Chromosome 1"/>
</dbReference>
<dbReference type="Bgee" id="ENSCAFG00000004610">
    <property type="expression patterns" value="Expressed in liver and 47 other cell types or tissues"/>
</dbReference>
<dbReference type="GO" id="GO:0042627">
    <property type="term" value="C:chylomicron"/>
    <property type="evidence" value="ECO:0000318"/>
    <property type="project" value="GO_Central"/>
</dbReference>
<dbReference type="GO" id="GO:0034363">
    <property type="term" value="C:intermediate-density lipoprotein particle"/>
    <property type="evidence" value="ECO:0000318"/>
    <property type="project" value="GO_Central"/>
</dbReference>
<dbReference type="GO" id="GO:0034362">
    <property type="term" value="C:low-density lipoprotein particle"/>
    <property type="evidence" value="ECO:0000318"/>
    <property type="project" value="GO_Central"/>
</dbReference>
<dbReference type="GO" id="GO:0034366">
    <property type="term" value="C:spherical high-density lipoprotein particle"/>
    <property type="evidence" value="ECO:0000318"/>
    <property type="project" value="GO_Central"/>
</dbReference>
<dbReference type="GO" id="GO:0034361">
    <property type="term" value="C:very-low-density lipoprotein particle"/>
    <property type="evidence" value="ECO:0000318"/>
    <property type="project" value="GO_Central"/>
</dbReference>
<dbReference type="GO" id="GO:0055102">
    <property type="term" value="F:lipase inhibitor activity"/>
    <property type="evidence" value="ECO:0007669"/>
    <property type="project" value="Ensembl"/>
</dbReference>
<dbReference type="GO" id="GO:0008289">
    <property type="term" value="F:lipid binding"/>
    <property type="evidence" value="ECO:0007669"/>
    <property type="project" value="Ensembl"/>
</dbReference>
<dbReference type="GO" id="GO:0060230">
    <property type="term" value="F:lipoprotein lipase activator activity"/>
    <property type="evidence" value="ECO:0007669"/>
    <property type="project" value="Ensembl"/>
</dbReference>
<dbReference type="GO" id="GO:0016004">
    <property type="term" value="F:phospholipase activator activity"/>
    <property type="evidence" value="ECO:0000318"/>
    <property type="project" value="GO_Central"/>
</dbReference>
<dbReference type="GO" id="GO:0043274">
    <property type="term" value="F:phospholipase binding"/>
    <property type="evidence" value="ECO:0000318"/>
    <property type="project" value="GO_Central"/>
</dbReference>
<dbReference type="GO" id="GO:0033344">
    <property type="term" value="P:cholesterol efflux"/>
    <property type="evidence" value="ECO:0007669"/>
    <property type="project" value="Ensembl"/>
</dbReference>
<dbReference type="GO" id="GO:0034382">
    <property type="term" value="P:chylomicron remnant clearance"/>
    <property type="evidence" value="ECO:0000318"/>
    <property type="project" value="GO_Central"/>
</dbReference>
<dbReference type="GO" id="GO:0034371">
    <property type="term" value="P:chylomicron remodeling"/>
    <property type="evidence" value="ECO:0007669"/>
    <property type="project" value="Ensembl"/>
</dbReference>
<dbReference type="GO" id="GO:0034384">
    <property type="term" value="P:high-density lipoprotein particle clearance"/>
    <property type="evidence" value="ECO:0000318"/>
    <property type="project" value="GO_Central"/>
</dbReference>
<dbReference type="GO" id="GO:0016042">
    <property type="term" value="P:lipid catabolic process"/>
    <property type="evidence" value="ECO:0007669"/>
    <property type="project" value="UniProtKB-KW"/>
</dbReference>
<dbReference type="GO" id="GO:0042159">
    <property type="term" value="P:lipoprotein catabolic process"/>
    <property type="evidence" value="ECO:0000318"/>
    <property type="project" value="GO_Central"/>
</dbReference>
<dbReference type="GO" id="GO:0032375">
    <property type="term" value="P:negative regulation of cholesterol transport"/>
    <property type="evidence" value="ECO:0007669"/>
    <property type="project" value="Ensembl"/>
</dbReference>
<dbReference type="GO" id="GO:0045833">
    <property type="term" value="P:negative regulation of lipid metabolic process"/>
    <property type="evidence" value="ECO:0007669"/>
    <property type="project" value="Ensembl"/>
</dbReference>
<dbReference type="GO" id="GO:0048261">
    <property type="term" value="P:negative regulation of receptor-mediated endocytosis"/>
    <property type="evidence" value="ECO:0007669"/>
    <property type="project" value="Ensembl"/>
</dbReference>
<dbReference type="GO" id="GO:0010916">
    <property type="term" value="P:negative regulation of very-low-density lipoprotein particle clearance"/>
    <property type="evidence" value="ECO:0007669"/>
    <property type="project" value="Ensembl"/>
</dbReference>
<dbReference type="GO" id="GO:0033700">
    <property type="term" value="P:phospholipid efflux"/>
    <property type="evidence" value="ECO:0007669"/>
    <property type="project" value="Ensembl"/>
</dbReference>
<dbReference type="GO" id="GO:0045723">
    <property type="term" value="P:positive regulation of fatty acid biosynthetic process"/>
    <property type="evidence" value="ECO:0007669"/>
    <property type="project" value="Ensembl"/>
</dbReference>
<dbReference type="GO" id="GO:0060697">
    <property type="term" value="P:positive regulation of phospholipid catabolic process"/>
    <property type="evidence" value="ECO:0007669"/>
    <property type="project" value="Ensembl"/>
</dbReference>
<dbReference type="GO" id="GO:0010898">
    <property type="term" value="P:positive regulation of triglyceride catabolic process"/>
    <property type="evidence" value="ECO:0007669"/>
    <property type="project" value="Ensembl"/>
</dbReference>
<dbReference type="GO" id="GO:0010902">
    <property type="term" value="P:positive regulation of very-low-density lipoprotein particle remodeling"/>
    <property type="evidence" value="ECO:0007669"/>
    <property type="project" value="Ensembl"/>
</dbReference>
<dbReference type="GO" id="GO:0070328">
    <property type="term" value="P:triglyceride homeostasis"/>
    <property type="evidence" value="ECO:0007669"/>
    <property type="project" value="Ensembl"/>
</dbReference>
<dbReference type="FunFam" id="1.10.1440.10:FF:000001">
    <property type="entry name" value="Apolipoprotein C-II"/>
    <property type="match status" value="1"/>
</dbReference>
<dbReference type="Gene3D" id="1.10.1440.10">
    <property type="entry name" value="Apolipoprotein C-II"/>
    <property type="match status" value="1"/>
</dbReference>
<dbReference type="InterPro" id="IPR008019">
    <property type="entry name" value="Apo-CII"/>
</dbReference>
<dbReference type="InterPro" id="IPR023121">
    <property type="entry name" value="ApoC-II_dom_sf"/>
</dbReference>
<dbReference type="PANTHER" id="PTHR16566">
    <property type="entry name" value="APOLIPOPROTEIN C-II"/>
    <property type="match status" value="1"/>
</dbReference>
<dbReference type="PANTHER" id="PTHR16566:SF0">
    <property type="entry name" value="APOLIPOPROTEIN C-II"/>
    <property type="match status" value="1"/>
</dbReference>
<dbReference type="Pfam" id="PF05355">
    <property type="entry name" value="Apo-CII"/>
    <property type="match status" value="1"/>
</dbReference>
<keyword id="KW-0162">Chylomicron</keyword>
<keyword id="KW-0903">Direct protein sequencing</keyword>
<keyword id="KW-0325">Glycoprotein</keyword>
<keyword id="KW-0345">HDL</keyword>
<keyword id="KW-0427">LDL</keyword>
<keyword id="KW-0442">Lipid degradation</keyword>
<keyword id="KW-0443">Lipid metabolism</keyword>
<keyword id="KW-0445">Lipid transport</keyword>
<keyword id="KW-1185">Reference proteome</keyword>
<keyword id="KW-0964">Secreted</keyword>
<keyword id="KW-0730">Sialic acid</keyword>
<keyword id="KW-0732">Signal</keyword>
<keyword id="KW-0813">Transport</keyword>
<keyword id="KW-0850">VLDL</keyword>